<keyword id="KW-0028">Amino-acid biosynthesis</keyword>
<keyword id="KW-0055">Arginine biosynthesis</keyword>
<keyword id="KW-0963">Cytoplasm</keyword>
<keyword id="KW-0238">DNA-binding</keyword>
<keyword id="KW-0678">Repressor</keyword>
<keyword id="KW-0804">Transcription</keyword>
<keyword id="KW-0805">Transcription regulation</keyword>
<sequence>MNKGQRHIKIREIIANKEIETQDELVDILRNEGFNVTQATVSRDIKELHLVKVPLHDGRYKYSLPADQRFNPLQKLKRNLVDSFVKLDTAGHMLVLKTLPGNAHSLGALIDHLEWDEIIGTICGDDTCLIICRTPEDTGVVSDRFLNML</sequence>
<proteinExistence type="inferred from homology"/>
<evidence type="ECO:0000255" key="1">
    <source>
        <dbReference type="HAMAP-Rule" id="MF_00173"/>
    </source>
</evidence>
<protein>
    <recommendedName>
        <fullName evidence="1">Arginine repressor</fullName>
    </recommendedName>
</protein>
<dbReference type="EMBL" id="CP000227">
    <property type="protein sequence ID" value="ACM14389.1"/>
    <property type="molecule type" value="Genomic_DNA"/>
</dbReference>
<dbReference type="SMR" id="B9IXG8"/>
<dbReference type="KEGG" id="bcq:BCQ_3961"/>
<dbReference type="HOGENOM" id="CLU_097103_3_0_9"/>
<dbReference type="UniPathway" id="UPA00068"/>
<dbReference type="Proteomes" id="UP000000441">
    <property type="component" value="Chromosome"/>
</dbReference>
<dbReference type="GO" id="GO:0005737">
    <property type="term" value="C:cytoplasm"/>
    <property type="evidence" value="ECO:0007669"/>
    <property type="project" value="UniProtKB-SubCell"/>
</dbReference>
<dbReference type="GO" id="GO:0034618">
    <property type="term" value="F:arginine binding"/>
    <property type="evidence" value="ECO:0007669"/>
    <property type="project" value="InterPro"/>
</dbReference>
<dbReference type="GO" id="GO:0003677">
    <property type="term" value="F:DNA binding"/>
    <property type="evidence" value="ECO:0007669"/>
    <property type="project" value="UniProtKB-KW"/>
</dbReference>
<dbReference type="GO" id="GO:0003700">
    <property type="term" value="F:DNA-binding transcription factor activity"/>
    <property type="evidence" value="ECO:0007669"/>
    <property type="project" value="UniProtKB-UniRule"/>
</dbReference>
<dbReference type="GO" id="GO:0006526">
    <property type="term" value="P:L-arginine biosynthetic process"/>
    <property type="evidence" value="ECO:0007669"/>
    <property type="project" value="UniProtKB-UniPathway"/>
</dbReference>
<dbReference type="GO" id="GO:0051259">
    <property type="term" value="P:protein complex oligomerization"/>
    <property type="evidence" value="ECO:0007669"/>
    <property type="project" value="InterPro"/>
</dbReference>
<dbReference type="GO" id="GO:1900079">
    <property type="term" value="P:regulation of arginine biosynthetic process"/>
    <property type="evidence" value="ECO:0007669"/>
    <property type="project" value="UniProtKB-UniRule"/>
</dbReference>
<dbReference type="FunFam" id="1.10.10.10:FF:000172">
    <property type="entry name" value="Arginine repressor"/>
    <property type="match status" value="1"/>
</dbReference>
<dbReference type="FunFam" id="3.30.1360.40:FF:000006">
    <property type="entry name" value="Arginine repressor"/>
    <property type="match status" value="1"/>
</dbReference>
<dbReference type="Gene3D" id="3.30.1360.40">
    <property type="match status" value="1"/>
</dbReference>
<dbReference type="Gene3D" id="1.10.10.10">
    <property type="entry name" value="Winged helix-like DNA-binding domain superfamily/Winged helix DNA-binding domain"/>
    <property type="match status" value="1"/>
</dbReference>
<dbReference type="HAMAP" id="MF_00173">
    <property type="entry name" value="Arg_repressor"/>
    <property type="match status" value="1"/>
</dbReference>
<dbReference type="InterPro" id="IPR001669">
    <property type="entry name" value="Arg_repress"/>
</dbReference>
<dbReference type="InterPro" id="IPR020899">
    <property type="entry name" value="Arg_repress_C"/>
</dbReference>
<dbReference type="InterPro" id="IPR036251">
    <property type="entry name" value="Arg_repress_C_sf"/>
</dbReference>
<dbReference type="InterPro" id="IPR020900">
    <property type="entry name" value="Arg_repress_DNA-bd"/>
</dbReference>
<dbReference type="InterPro" id="IPR036388">
    <property type="entry name" value="WH-like_DNA-bd_sf"/>
</dbReference>
<dbReference type="InterPro" id="IPR036390">
    <property type="entry name" value="WH_DNA-bd_sf"/>
</dbReference>
<dbReference type="NCBIfam" id="TIGR01529">
    <property type="entry name" value="argR_whole"/>
    <property type="match status" value="1"/>
</dbReference>
<dbReference type="NCBIfam" id="NF003281">
    <property type="entry name" value="PRK04280.1"/>
    <property type="match status" value="1"/>
</dbReference>
<dbReference type="PANTHER" id="PTHR34471">
    <property type="entry name" value="ARGININE REPRESSOR"/>
    <property type="match status" value="1"/>
</dbReference>
<dbReference type="PANTHER" id="PTHR34471:SF1">
    <property type="entry name" value="ARGININE REPRESSOR"/>
    <property type="match status" value="1"/>
</dbReference>
<dbReference type="Pfam" id="PF01316">
    <property type="entry name" value="Arg_repressor"/>
    <property type="match status" value="1"/>
</dbReference>
<dbReference type="Pfam" id="PF02863">
    <property type="entry name" value="Arg_repressor_C"/>
    <property type="match status" value="1"/>
</dbReference>
<dbReference type="PRINTS" id="PR01467">
    <property type="entry name" value="ARGREPRESSOR"/>
</dbReference>
<dbReference type="SUPFAM" id="SSF55252">
    <property type="entry name" value="C-terminal domain of arginine repressor"/>
    <property type="match status" value="1"/>
</dbReference>
<dbReference type="SUPFAM" id="SSF46785">
    <property type="entry name" value="Winged helix' DNA-binding domain"/>
    <property type="match status" value="1"/>
</dbReference>
<name>ARGR_BACCQ</name>
<reference key="1">
    <citation type="journal article" date="2009" name="J. Bacteriol.">
        <title>Complete genome sequence of the extremophilic Bacillus cereus strain Q1 with industrial applications.</title>
        <authorList>
            <person name="Xiong Z."/>
            <person name="Jiang Y."/>
            <person name="Qi D."/>
            <person name="Lu H."/>
            <person name="Yang F."/>
            <person name="Yang J."/>
            <person name="Chen L."/>
            <person name="Sun L."/>
            <person name="Xu X."/>
            <person name="Xue Y."/>
            <person name="Zhu Y."/>
            <person name="Jin Q."/>
        </authorList>
    </citation>
    <scope>NUCLEOTIDE SEQUENCE [LARGE SCALE GENOMIC DNA]</scope>
    <source>
        <strain>Q1</strain>
    </source>
</reference>
<feature type="chain" id="PRO_1000123786" description="Arginine repressor">
    <location>
        <begin position="1"/>
        <end position="149"/>
    </location>
</feature>
<organism>
    <name type="scientific">Bacillus cereus (strain Q1)</name>
    <dbReference type="NCBI Taxonomy" id="361100"/>
    <lineage>
        <taxon>Bacteria</taxon>
        <taxon>Bacillati</taxon>
        <taxon>Bacillota</taxon>
        <taxon>Bacilli</taxon>
        <taxon>Bacillales</taxon>
        <taxon>Bacillaceae</taxon>
        <taxon>Bacillus</taxon>
        <taxon>Bacillus cereus group</taxon>
    </lineage>
</organism>
<accession>B9IXG8</accession>
<comment type="function">
    <text evidence="1">Regulates arginine biosynthesis genes.</text>
</comment>
<comment type="pathway">
    <text>Amino-acid biosynthesis; L-arginine biosynthesis [regulation].</text>
</comment>
<comment type="subcellular location">
    <subcellularLocation>
        <location evidence="1">Cytoplasm</location>
    </subcellularLocation>
</comment>
<comment type="similarity">
    <text evidence="1">Belongs to the ArgR family.</text>
</comment>
<gene>
    <name evidence="1" type="primary">argR</name>
    <name type="ordered locus">BCQ_3961</name>
</gene>